<gene>
    <name type="primary">TOMM34</name>
</gene>
<organism>
    <name type="scientific">Pongo abelii</name>
    <name type="common">Sumatran orangutan</name>
    <name type="synonym">Pongo pygmaeus abelii</name>
    <dbReference type="NCBI Taxonomy" id="9601"/>
    <lineage>
        <taxon>Eukaryota</taxon>
        <taxon>Metazoa</taxon>
        <taxon>Chordata</taxon>
        <taxon>Craniata</taxon>
        <taxon>Vertebrata</taxon>
        <taxon>Euteleostomi</taxon>
        <taxon>Mammalia</taxon>
        <taxon>Eutheria</taxon>
        <taxon>Euarchontoglires</taxon>
        <taxon>Primates</taxon>
        <taxon>Haplorrhini</taxon>
        <taxon>Catarrhini</taxon>
        <taxon>Hominidae</taxon>
        <taxon>Pongo</taxon>
    </lineage>
</organism>
<sequence length="309" mass="34534">MAPKFPDCVEELRAAGNESFRNGQYAEASALYGRALRVLQAQGSSDPEEESVLYSNRAACHLKDGNCRDCIKDCTSALALVPFSIKPLLRRASAYEALEKYPMAYVDYKTVLQIDDSVTSALEGINRMTRALMDSLGPEWRLKLPSIPLVPVSAQKRWNSLPSENHKEMAKSKSKETTATKNRVPSAGDVEKAKVLKEEGNELVKKGNHKKAIEKYSESLLCSNLESATYSNRALCYLVLKQYTEAVKDCTEALKLDGKNVKAFYRRAQAHKALKDYKSSFADISNLLQIEPRNGPAQKLRQEVKQNLH</sequence>
<evidence type="ECO:0000250" key="1"/>
<evidence type="ECO:0000250" key="2">
    <source>
        <dbReference type="UniProtKB" id="Q15785"/>
    </source>
</evidence>
<evidence type="ECO:0000256" key="3">
    <source>
        <dbReference type="SAM" id="MobiDB-lite"/>
    </source>
</evidence>
<evidence type="ECO:0000305" key="4"/>
<keyword id="KW-0143">Chaperone</keyword>
<keyword id="KW-0963">Cytoplasm</keyword>
<keyword id="KW-1017">Isopeptide bond</keyword>
<keyword id="KW-0472">Membrane</keyword>
<keyword id="KW-0496">Mitochondrion</keyword>
<keyword id="KW-1000">Mitochondrion outer membrane</keyword>
<keyword id="KW-0597">Phosphoprotein</keyword>
<keyword id="KW-1185">Reference proteome</keyword>
<keyword id="KW-0677">Repeat</keyword>
<keyword id="KW-0802">TPR repeat</keyword>
<keyword id="KW-0832">Ubl conjugation</keyword>
<protein>
    <recommendedName>
        <fullName>Mitochondrial import receptor subunit TOM34</fullName>
    </recommendedName>
    <alternativeName>
        <fullName>Translocase of outer membrane 34 kDa subunit</fullName>
    </alternativeName>
</protein>
<accession>A4K2V0</accession>
<accession>Q5RAI1</accession>
<feature type="chain" id="PRO_0000329293" description="Mitochondrial import receptor subunit TOM34">
    <location>
        <begin position="1"/>
        <end position="309"/>
    </location>
</feature>
<feature type="repeat" description="TPR 1">
    <location>
        <begin position="9"/>
        <end position="42"/>
    </location>
</feature>
<feature type="repeat" description="TPR 2">
    <location>
        <begin position="51"/>
        <end position="84"/>
    </location>
</feature>
<feature type="repeat" description="TPR 3">
    <location>
        <begin position="86"/>
        <end position="118"/>
    </location>
</feature>
<feature type="repeat" description="TPR 4">
    <location>
        <begin position="193"/>
        <end position="226"/>
    </location>
</feature>
<feature type="repeat" description="TPR 5">
    <location>
        <begin position="227"/>
        <end position="260"/>
    </location>
</feature>
<feature type="repeat" description="TPR 6">
    <location>
        <begin position="262"/>
        <end position="294"/>
    </location>
</feature>
<feature type="region of interest" description="Disordered" evidence="3">
    <location>
        <begin position="161"/>
        <end position="189"/>
    </location>
</feature>
<feature type="compositionally biased region" description="Basic and acidic residues" evidence="3">
    <location>
        <begin position="164"/>
        <end position="178"/>
    </location>
</feature>
<feature type="modified residue" description="Phosphoserine" evidence="2">
    <location>
        <position position="160"/>
    </location>
</feature>
<feature type="modified residue" description="Phosphoserine" evidence="2">
    <location>
        <position position="186"/>
    </location>
</feature>
<feature type="cross-link" description="Glycyl lysine isopeptide (Lys-Gly) (interchain with G-Cter in SUMO2)" evidence="2">
    <location>
        <position position="197"/>
    </location>
</feature>
<feature type="sequence conflict" description="In Ref. 1; CAH91229." evidence="4" ref="1">
    <original>C</original>
    <variation>S</variation>
    <location>
        <position position="8"/>
    </location>
</feature>
<feature type="sequence conflict" description="In Ref. 1; CAH91229." evidence="4" ref="1">
    <original>S</original>
    <variation>N</variation>
    <location>
        <position position="117"/>
    </location>
</feature>
<feature type="sequence conflict" description="In Ref. 1; CAH91229." evidence="4" ref="1">
    <original>L</original>
    <variation>V</variation>
    <location>
        <position position="122"/>
    </location>
</feature>
<feature type="sequence conflict" description="In Ref. 1; CAH91229." evidence="4" ref="1">
    <original>N</original>
    <variation>S</variation>
    <location>
        <position position="126"/>
    </location>
</feature>
<feature type="sequence conflict" description="In Ref. 1; CAH91229." evidence="4" ref="1">
    <original>K</original>
    <variation>R</variation>
    <location>
        <position position="194"/>
    </location>
</feature>
<feature type="sequence conflict" description="In Ref. 1; CAH91229." evidence="4" ref="1">
    <original>Q</original>
    <variation>P</variation>
    <location>
        <position position="242"/>
    </location>
</feature>
<name>TOM34_PONAB</name>
<reference key="1">
    <citation type="submission" date="2004-11" db="EMBL/GenBank/DDBJ databases">
        <authorList>
            <consortium name="The German cDNA consortium"/>
        </authorList>
    </citation>
    <scope>NUCLEOTIDE SEQUENCE [LARGE SCALE MRNA]</scope>
    <source>
        <tissue>Heart</tissue>
    </source>
</reference>
<reference key="2">
    <citation type="journal article" date="2007" name="Genome Res.">
        <title>Comparative sequence analyses reveal rapid and divergent evolutionary changes of the WFDC locus in the primate lineage.</title>
        <authorList>
            <consortium name="NISC comparative sequencing program"/>
            <person name="Hurle B."/>
            <person name="Swanson W."/>
            <person name="Green E.D."/>
        </authorList>
    </citation>
    <scope>NUCLEOTIDE SEQUENCE [GENOMIC DNA]</scope>
</reference>
<proteinExistence type="evidence at transcript level"/>
<dbReference type="EMBL" id="CR859034">
    <property type="protein sequence ID" value="CAH91229.1"/>
    <property type="molecule type" value="mRNA"/>
</dbReference>
<dbReference type="EMBL" id="DP000045">
    <property type="protein sequence ID" value="ABO52985.1"/>
    <property type="molecule type" value="Genomic_DNA"/>
</dbReference>
<dbReference type="RefSeq" id="NP_001125725.2">
    <property type="nucleotide sequence ID" value="NM_001132253.2"/>
</dbReference>
<dbReference type="SMR" id="A4K2V0"/>
<dbReference type="FunCoup" id="A4K2V0">
    <property type="interactions" value="2501"/>
</dbReference>
<dbReference type="STRING" id="9601.ENSPPYP00000012334"/>
<dbReference type="Ensembl" id="ENSPPYT00000012816.3">
    <property type="protein sequence ID" value="ENSPPYP00000012334.2"/>
    <property type="gene ID" value="ENSPPYG00000011044.3"/>
</dbReference>
<dbReference type="GeneID" id="100172650"/>
<dbReference type="CTD" id="10953"/>
<dbReference type="eggNOG" id="KOG1124">
    <property type="taxonomic scope" value="Eukaryota"/>
</dbReference>
<dbReference type="GeneTree" id="ENSGT00940000161058"/>
<dbReference type="HOGENOM" id="CLU_061396_0_0_1"/>
<dbReference type="InParanoid" id="A4K2V0"/>
<dbReference type="OMA" id="ECTTYTN"/>
<dbReference type="OrthoDB" id="245563at2759"/>
<dbReference type="TreeFam" id="TF106202"/>
<dbReference type="Proteomes" id="UP000001595">
    <property type="component" value="Chromosome 20"/>
</dbReference>
<dbReference type="GO" id="GO:0005829">
    <property type="term" value="C:cytosol"/>
    <property type="evidence" value="ECO:0007669"/>
    <property type="project" value="Ensembl"/>
</dbReference>
<dbReference type="GO" id="GO:0005741">
    <property type="term" value="C:mitochondrial outer membrane"/>
    <property type="evidence" value="ECO:0007669"/>
    <property type="project" value="UniProtKB-SubCell"/>
</dbReference>
<dbReference type="GO" id="GO:0031072">
    <property type="term" value="F:heat shock protein binding"/>
    <property type="evidence" value="ECO:0007669"/>
    <property type="project" value="Ensembl"/>
</dbReference>
<dbReference type="GO" id="GO:0006626">
    <property type="term" value="P:protein targeting to mitochondrion"/>
    <property type="evidence" value="ECO:0007669"/>
    <property type="project" value="Ensembl"/>
</dbReference>
<dbReference type="FunFam" id="1.25.40.10:FF:000221">
    <property type="entry name" value="Mitochondrial import receptor subunit TOM34"/>
    <property type="match status" value="1"/>
</dbReference>
<dbReference type="FunFam" id="1.25.40.10:FF:000312">
    <property type="entry name" value="Mitochondrial import receptor subunit TOM34"/>
    <property type="match status" value="1"/>
</dbReference>
<dbReference type="Gene3D" id="1.25.40.10">
    <property type="entry name" value="Tetratricopeptide repeat domain"/>
    <property type="match status" value="2"/>
</dbReference>
<dbReference type="InterPro" id="IPR051982">
    <property type="entry name" value="CiliaryAsmbly_MitoImport"/>
</dbReference>
<dbReference type="InterPro" id="IPR011990">
    <property type="entry name" value="TPR-like_helical_dom_sf"/>
</dbReference>
<dbReference type="InterPro" id="IPR019734">
    <property type="entry name" value="TPR_rpt"/>
</dbReference>
<dbReference type="PANTHER" id="PTHR45984:SF2">
    <property type="entry name" value="MITOCHONDRIAL IMPORT RECEPTOR SUBUNIT TOM34"/>
    <property type="match status" value="1"/>
</dbReference>
<dbReference type="PANTHER" id="PTHR45984">
    <property type="entry name" value="RNA (RNA) POLYMERASE II ASSOCIATED PROTEIN HOMOLOG"/>
    <property type="match status" value="1"/>
</dbReference>
<dbReference type="Pfam" id="PF00515">
    <property type="entry name" value="TPR_1"/>
    <property type="match status" value="1"/>
</dbReference>
<dbReference type="SMART" id="SM00028">
    <property type="entry name" value="TPR"/>
    <property type="match status" value="6"/>
</dbReference>
<dbReference type="SUPFAM" id="SSF48452">
    <property type="entry name" value="TPR-like"/>
    <property type="match status" value="2"/>
</dbReference>
<dbReference type="PROSITE" id="PS50005">
    <property type="entry name" value="TPR"/>
    <property type="match status" value="5"/>
</dbReference>
<dbReference type="PROSITE" id="PS50293">
    <property type="entry name" value="TPR_REGION"/>
    <property type="match status" value="2"/>
</dbReference>
<comment type="function">
    <text evidence="1">Plays a role in the import of cytosolically synthesized preproteins into mitochondria. Binds the mature portion of precursor proteins. Interacts with cellular components, and possesses weak ATPase activity. May be a chaperone-like protein that helps to keep newly synthesized precursors in an unfolded import compatible state (By similarity).</text>
</comment>
<comment type="subunit">
    <text evidence="1">Interacts with HSP90A, VCP, ATP6V1D, KIAA0665, AMPK, and DMAP1 through its TPR repeat.</text>
</comment>
<comment type="subcellular location">
    <subcellularLocation>
        <location evidence="1">Cytoplasm</location>
    </subcellularLocation>
    <subcellularLocation>
        <location evidence="1">Mitochondrion outer membrane</location>
        <topology evidence="1">Peripheral membrane protein</topology>
        <orientation evidence="1">Cytoplasmic side</orientation>
    </subcellularLocation>
</comment>
<comment type="similarity">
    <text evidence="4">Belongs to the Tom34 family.</text>
</comment>